<evidence type="ECO:0000250" key="1"/>
<evidence type="ECO:0000255" key="2"/>
<evidence type="ECO:0000305" key="3"/>
<dbReference type="EMBL" id="AB025630">
    <property type="status" value="NOT_ANNOTATED_CDS"/>
    <property type="molecule type" value="Genomic_DNA"/>
</dbReference>
<dbReference type="EMBL" id="AP000607">
    <property type="status" value="NOT_ANNOTATED_CDS"/>
    <property type="molecule type" value="Genomic_DNA"/>
</dbReference>
<dbReference type="EMBL" id="CP002688">
    <property type="protein sequence ID" value="AED94194.1"/>
    <property type="molecule type" value="Genomic_DNA"/>
</dbReference>
<dbReference type="RefSeq" id="NP_001031977.1">
    <property type="nucleotide sequence ID" value="NM_001036900.2"/>
</dbReference>
<dbReference type="SMR" id="Q2V328"/>
<dbReference type="PaxDb" id="3702-AT5G37474.1"/>
<dbReference type="ProteomicsDB" id="224011"/>
<dbReference type="EnsemblPlants" id="AT5G37474.1">
    <property type="protein sequence ID" value="AT5G37474.1"/>
    <property type="gene ID" value="AT5G37474"/>
</dbReference>
<dbReference type="GeneID" id="3771346"/>
<dbReference type="Gramene" id="AT5G37474.1">
    <property type="protein sequence ID" value="AT5G37474.1"/>
    <property type="gene ID" value="AT5G37474"/>
</dbReference>
<dbReference type="KEGG" id="ath:AT5G37474"/>
<dbReference type="Araport" id="AT5G37474"/>
<dbReference type="TAIR" id="AT5G37474"/>
<dbReference type="HOGENOM" id="CLU_198543_0_0_1"/>
<dbReference type="InParanoid" id="Q2V328"/>
<dbReference type="OMA" id="DQCKRIC"/>
<dbReference type="OrthoDB" id="1056615at2759"/>
<dbReference type="PhylomeDB" id="Q2V328"/>
<dbReference type="PRO" id="PR:Q2V328"/>
<dbReference type="Proteomes" id="UP000006548">
    <property type="component" value="Chromosome 5"/>
</dbReference>
<dbReference type="ExpressionAtlas" id="Q2V328">
    <property type="expression patterns" value="baseline"/>
</dbReference>
<dbReference type="GO" id="GO:0005576">
    <property type="term" value="C:extracellular region"/>
    <property type="evidence" value="ECO:0007669"/>
    <property type="project" value="UniProtKB-SubCell"/>
</dbReference>
<dbReference type="GO" id="GO:0050832">
    <property type="term" value="P:defense response to fungus"/>
    <property type="evidence" value="ECO:0007669"/>
    <property type="project" value="UniProtKB-KW"/>
</dbReference>
<dbReference type="GO" id="GO:0031640">
    <property type="term" value="P:killing of cells of another organism"/>
    <property type="evidence" value="ECO:0007669"/>
    <property type="project" value="UniProtKB-KW"/>
</dbReference>
<dbReference type="InterPro" id="IPR010851">
    <property type="entry name" value="DEFL"/>
</dbReference>
<dbReference type="PANTHER" id="PTHR48224:SF1">
    <property type="entry name" value="DEFENSIN-LIKE PROTEIN 270"/>
    <property type="match status" value="1"/>
</dbReference>
<dbReference type="PANTHER" id="PTHR48224">
    <property type="entry name" value="DEFENSIN-LIKE PROTEIN 270-RELATED"/>
    <property type="match status" value="1"/>
</dbReference>
<dbReference type="Pfam" id="PF25052">
    <property type="entry name" value="AtDEF-like"/>
    <property type="match status" value="1"/>
</dbReference>
<protein>
    <recommendedName>
        <fullName>Defensin-like protein 276</fullName>
    </recommendedName>
</protein>
<sequence length="80" mass="8682">MSGQKYQLVSLLLIICLLFSQSTASGCNFKGSCRTDDQCKRICRGHGLDPSFQLCVPYSSKGGKCCCLHYEGAPLSSEVI</sequence>
<keyword id="KW-0929">Antimicrobial</keyword>
<keyword id="KW-1015">Disulfide bond</keyword>
<keyword id="KW-0295">Fungicide</keyword>
<keyword id="KW-0611">Plant defense</keyword>
<keyword id="KW-1185">Reference proteome</keyword>
<keyword id="KW-0964">Secreted</keyword>
<keyword id="KW-0732">Signal</keyword>
<feature type="signal peptide" evidence="2">
    <location>
        <begin position="1"/>
        <end position="24"/>
    </location>
</feature>
<feature type="chain" id="PRO_0000379737" description="Defensin-like protein 276">
    <location>
        <begin position="25"/>
        <end position="80"/>
    </location>
</feature>
<feature type="disulfide bond" evidence="1">
    <location>
        <begin position="27"/>
        <end position="67"/>
    </location>
</feature>
<feature type="disulfide bond" evidence="1">
    <location>
        <begin position="33"/>
        <end position="55"/>
    </location>
</feature>
<feature type="disulfide bond" evidence="1">
    <location>
        <begin position="39"/>
        <end position="65"/>
    </location>
</feature>
<feature type="disulfide bond" evidence="1">
    <location>
        <begin position="43"/>
        <end position="66"/>
    </location>
</feature>
<accession>Q2V328</accession>
<organism>
    <name type="scientific">Arabidopsis thaliana</name>
    <name type="common">Mouse-ear cress</name>
    <dbReference type="NCBI Taxonomy" id="3702"/>
    <lineage>
        <taxon>Eukaryota</taxon>
        <taxon>Viridiplantae</taxon>
        <taxon>Streptophyta</taxon>
        <taxon>Embryophyta</taxon>
        <taxon>Tracheophyta</taxon>
        <taxon>Spermatophyta</taxon>
        <taxon>Magnoliopsida</taxon>
        <taxon>eudicotyledons</taxon>
        <taxon>Gunneridae</taxon>
        <taxon>Pentapetalae</taxon>
        <taxon>rosids</taxon>
        <taxon>malvids</taxon>
        <taxon>Brassicales</taxon>
        <taxon>Brassicaceae</taxon>
        <taxon>Camelineae</taxon>
        <taxon>Arabidopsis</taxon>
    </lineage>
</organism>
<gene>
    <name type="ordered locus">At5g37474</name>
    <name type="ORF">MPA22</name>
    <name type="ORF">T25O11</name>
</gene>
<proteinExistence type="evidence at transcript level"/>
<name>DF276_ARATH</name>
<comment type="subcellular location">
    <subcellularLocation>
        <location evidence="1">Secreted</location>
    </subcellularLocation>
</comment>
<comment type="similarity">
    <text evidence="3">Belongs to the DEFL family.</text>
</comment>
<reference key="1">
    <citation type="submission" date="1999-10" db="EMBL/GenBank/DDBJ databases">
        <title>Structural analysis of Arabidopsis thaliana chromosome 5. XI.</title>
        <authorList>
            <person name="Kaneko T."/>
            <person name="Katoh T."/>
            <person name="Asamizu E."/>
            <person name="Sato S."/>
            <person name="Nakamura Y."/>
            <person name="Kotani H."/>
            <person name="Tabata S."/>
        </authorList>
    </citation>
    <scope>NUCLEOTIDE SEQUENCE [LARGE SCALE GENOMIC DNA]</scope>
    <source>
        <strain>cv. Columbia</strain>
    </source>
</reference>
<reference key="2">
    <citation type="journal article" date="2017" name="Plant J.">
        <title>Araport11: a complete reannotation of the Arabidopsis thaliana reference genome.</title>
        <authorList>
            <person name="Cheng C.Y."/>
            <person name="Krishnakumar V."/>
            <person name="Chan A.P."/>
            <person name="Thibaud-Nissen F."/>
            <person name="Schobel S."/>
            <person name="Town C.D."/>
        </authorList>
    </citation>
    <scope>GENOME REANNOTATION</scope>
    <source>
        <strain>cv. Columbia</strain>
    </source>
</reference>
<reference key="3">
    <citation type="journal article" date="2005" name="Plant Physiol.">
        <title>Genome organization of more than 300 defensin-like genes in Arabidopsis.</title>
        <authorList>
            <person name="Silverstein K.A.T."/>
            <person name="Graham M.A."/>
            <person name="Paape T.D."/>
            <person name="VandenBosch K.A."/>
        </authorList>
    </citation>
    <scope>GENE FAMILY</scope>
</reference>